<sequence>MKIAKNVVVSIAYQVRTEDGVLVDEAPVNQPLEYLQGHNNLVIGLENALEGKAVGDKFEVRVKPEEAYGEYNENMVQRVPKDVFQGVDELVVGMRFIADTDIGPLPVVITEVAENDVVVDGNHMLAGQELLFSVEVVATREATLEEIAHGHIHQEGGCCGGHHHDSDEEGHGCGCGSHHHHEHEHHAHDGCCGNGGCKH</sequence>
<organism>
    <name type="scientific">Pasteurella multocida (strain Pm70)</name>
    <dbReference type="NCBI Taxonomy" id="272843"/>
    <lineage>
        <taxon>Bacteria</taxon>
        <taxon>Pseudomonadati</taxon>
        <taxon>Pseudomonadota</taxon>
        <taxon>Gammaproteobacteria</taxon>
        <taxon>Pasteurellales</taxon>
        <taxon>Pasteurellaceae</taxon>
        <taxon>Pasteurella</taxon>
    </lineage>
</organism>
<proteinExistence type="evidence at protein level"/>
<reference key="1">
    <citation type="journal article" date="2001" name="Proc. Natl. Acad. Sci. U.S.A.">
        <title>Complete genomic sequence of Pasteurella multocida Pm70.</title>
        <authorList>
            <person name="May B.J."/>
            <person name="Zhang Q."/>
            <person name="Li L.L."/>
            <person name="Paustian M.L."/>
            <person name="Whittam T.S."/>
            <person name="Kapur V."/>
        </authorList>
    </citation>
    <scope>NUCLEOTIDE SEQUENCE [LARGE SCALE GENOMIC DNA]</scope>
    <source>
        <strain>Pm70</strain>
    </source>
</reference>
<reference key="2">
    <citation type="journal article" date="2006" name="Biochemistry">
        <title>SlyD proteins from different species exhibit high prolyl isomerase and chaperone activities.</title>
        <authorList>
            <person name="Scholz C."/>
            <person name="Eckert B."/>
            <person name="Hagn F."/>
            <person name="Schaarschmidt P."/>
            <person name="Balbach J."/>
            <person name="Schmid F.X."/>
        </authorList>
    </citation>
    <scope>FUNCTION AS A CHAPERONE AND A PPIASE</scope>
    <scope>CATALYTIC ACTIVITY</scope>
</reference>
<keyword id="KW-0143">Chaperone</keyword>
<keyword id="KW-0963">Cytoplasm</keyword>
<keyword id="KW-0413">Isomerase</keyword>
<keyword id="KW-0479">Metal-binding</keyword>
<keyword id="KW-0533">Nickel</keyword>
<keyword id="KW-1185">Reference proteome</keyword>
<keyword id="KW-0697">Rotamase</keyword>
<comment type="function">
    <text evidence="4">Folding helper with both chaperone and peptidyl-prolyl cis-trans isomerase (PPIase) activities. Chaperone activity prevents aggregation of unfolded or partially folded proteins and promotes their correct folding. PPIases catalyze the cis-trans isomerization of Xaa-Pro bonds of peptides, which accelerates slow steps of protein folding and thus shortens the lifetime of intermediates. Both strategies lower the concentration of intermediates and increase the productivity and yield of the folding reaction.</text>
</comment>
<comment type="function">
    <text evidence="1">Also involved in hydrogenase metallocenter assembly, probably by participating in the nickel insertion step. This function in hydrogenase biosynthesis requires chaperone activity and the presence of the metal-binding domain, but not PPIase activity (By similarity).</text>
</comment>
<comment type="catalytic activity">
    <reaction evidence="4">
        <text>[protein]-peptidylproline (omega=180) = [protein]-peptidylproline (omega=0)</text>
        <dbReference type="Rhea" id="RHEA:16237"/>
        <dbReference type="Rhea" id="RHEA-COMP:10747"/>
        <dbReference type="Rhea" id="RHEA-COMP:10748"/>
        <dbReference type="ChEBI" id="CHEBI:83833"/>
        <dbReference type="ChEBI" id="CHEBI:83834"/>
        <dbReference type="EC" id="5.2.1.8"/>
    </reaction>
</comment>
<comment type="subcellular location">
    <subcellularLocation>
        <location evidence="1">Cytoplasm</location>
    </subcellularLocation>
</comment>
<comment type="domain">
    <text evidence="1">The N-terminal region consists of two globular folded domains that contain prolyl isomerase and chaperone activities.</text>
</comment>
<comment type="domain">
    <text evidence="1">The C-terminal region binds nickel ions.</text>
</comment>
<comment type="similarity">
    <text evidence="5">Belongs to the FKBP-type PPIase family.</text>
</comment>
<accession>Q9CKP2</accession>
<protein>
    <recommendedName>
        <fullName>FKBP-type peptidyl-prolyl cis-trans isomerase SlyD</fullName>
        <shortName>PPIase</shortName>
        <ecNumber>5.2.1.8</ecNumber>
    </recommendedName>
    <alternativeName>
        <fullName>Metallochaperone SlyD</fullName>
    </alternativeName>
</protein>
<evidence type="ECO:0000250" key="1"/>
<evidence type="ECO:0000255" key="2"/>
<evidence type="ECO:0000255" key="3">
    <source>
        <dbReference type="PROSITE-ProRule" id="PRU00277"/>
    </source>
</evidence>
<evidence type="ECO:0000269" key="4">
    <source>
    </source>
</evidence>
<evidence type="ECO:0000305" key="5"/>
<dbReference type="EC" id="5.2.1.8"/>
<dbReference type="EMBL" id="AE004439">
    <property type="protein sequence ID" value="AAK03651.1"/>
    <property type="molecule type" value="Genomic_DNA"/>
</dbReference>
<dbReference type="RefSeq" id="WP_005724401.1">
    <property type="nucleotide sequence ID" value="NC_002663.1"/>
</dbReference>
<dbReference type="SMR" id="Q9CKP2"/>
<dbReference type="STRING" id="272843.PM1567"/>
<dbReference type="EnsemblBacteria" id="AAK03651">
    <property type="protein sequence ID" value="AAK03651"/>
    <property type="gene ID" value="PM1567"/>
</dbReference>
<dbReference type="KEGG" id="pmu:PM1567"/>
<dbReference type="HOGENOM" id="CLU_098197_1_0_6"/>
<dbReference type="OrthoDB" id="9808891at2"/>
<dbReference type="Proteomes" id="UP000000809">
    <property type="component" value="Chromosome"/>
</dbReference>
<dbReference type="GO" id="GO:0005737">
    <property type="term" value="C:cytoplasm"/>
    <property type="evidence" value="ECO:0007669"/>
    <property type="project" value="UniProtKB-SubCell"/>
</dbReference>
<dbReference type="GO" id="GO:0046872">
    <property type="term" value="F:metal ion binding"/>
    <property type="evidence" value="ECO:0007669"/>
    <property type="project" value="UniProtKB-KW"/>
</dbReference>
<dbReference type="GO" id="GO:0003755">
    <property type="term" value="F:peptidyl-prolyl cis-trans isomerase activity"/>
    <property type="evidence" value="ECO:0000314"/>
    <property type="project" value="UniProtKB"/>
</dbReference>
<dbReference type="GO" id="GO:0042026">
    <property type="term" value="P:protein refolding"/>
    <property type="evidence" value="ECO:0000314"/>
    <property type="project" value="UniProtKB"/>
</dbReference>
<dbReference type="Gene3D" id="2.40.10.330">
    <property type="match status" value="1"/>
</dbReference>
<dbReference type="Gene3D" id="3.10.50.40">
    <property type="match status" value="1"/>
</dbReference>
<dbReference type="InterPro" id="IPR046357">
    <property type="entry name" value="PPIase_dom_sf"/>
</dbReference>
<dbReference type="InterPro" id="IPR001179">
    <property type="entry name" value="PPIase_FKBP_dom"/>
</dbReference>
<dbReference type="InterPro" id="IPR048261">
    <property type="entry name" value="SlpA/SlyD-like_ins_sf"/>
</dbReference>
<dbReference type="NCBIfam" id="NF008008">
    <property type="entry name" value="PRK10737.1"/>
    <property type="match status" value="1"/>
</dbReference>
<dbReference type="PANTHER" id="PTHR47861">
    <property type="entry name" value="FKBP-TYPE PEPTIDYL-PROLYL CIS-TRANS ISOMERASE SLYD"/>
    <property type="match status" value="1"/>
</dbReference>
<dbReference type="PANTHER" id="PTHR47861:SF3">
    <property type="entry name" value="FKBP-TYPE PEPTIDYL-PROLYL CIS-TRANS ISOMERASE SLYD"/>
    <property type="match status" value="1"/>
</dbReference>
<dbReference type="Pfam" id="PF00254">
    <property type="entry name" value="FKBP_C"/>
    <property type="match status" value="1"/>
</dbReference>
<dbReference type="SUPFAM" id="SSF54534">
    <property type="entry name" value="FKBP-like"/>
    <property type="match status" value="1"/>
</dbReference>
<dbReference type="PROSITE" id="PS50059">
    <property type="entry name" value="FKBP_PPIASE"/>
    <property type="match status" value="1"/>
</dbReference>
<gene>
    <name type="primary">slyD</name>
    <name type="synonym">fkpA</name>
    <name type="ordered locus">PM1567</name>
</gene>
<feature type="chain" id="PRO_0000392671" description="FKBP-type peptidyl-prolyl cis-trans isomerase SlyD">
    <location>
        <begin position="1"/>
        <end position="199"/>
    </location>
</feature>
<feature type="domain" description="PPIase FKBP-type" evidence="3">
    <location>
        <begin position="6"/>
        <end position="95"/>
    </location>
</feature>
<feature type="region of interest" description="PPIase first part" evidence="1">
    <location>
        <begin position="1"/>
        <end position="69"/>
    </location>
</feature>
<feature type="region of interest" description="IF-chaperone" evidence="1">
    <location>
        <begin position="76"/>
        <end position="120"/>
    </location>
</feature>
<feature type="region of interest" description="PPIase second part" evidence="1">
    <location>
        <begin position="129"/>
        <end position="151"/>
    </location>
</feature>
<feature type="binding site" evidence="2">
    <location>
        <position position="173"/>
    </location>
    <ligand>
        <name>Ni(2+)</name>
        <dbReference type="ChEBI" id="CHEBI:49786"/>
    </ligand>
</feature>
<feature type="binding site" evidence="2">
    <location>
        <position position="191"/>
    </location>
    <ligand>
        <name>Ni(2+)</name>
        <dbReference type="ChEBI" id="CHEBI:49786"/>
    </ligand>
</feature>
<feature type="binding site" evidence="2">
    <location>
        <position position="192"/>
    </location>
    <ligand>
        <name>Ni(2+)</name>
        <dbReference type="ChEBI" id="CHEBI:49786"/>
    </ligand>
</feature>
<feature type="binding site" evidence="2">
    <location>
        <position position="197"/>
    </location>
    <ligand>
        <name>Ni(2+)</name>
        <dbReference type="ChEBI" id="CHEBI:49786"/>
    </ligand>
</feature>
<name>SLYD_PASMU</name>